<feature type="initiator methionine" description="Removed" evidence="1">
    <location>
        <position position="1"/>
    </location>
</feature>
<feature type="chain" id="PRO_0000186534" description="PTS system glucose-specific EIIA component">
    <location>
        <begin position="2"/>
        <end position="169"/>
    </location>
</feature>
<feature type="domain" description="PTS EIIA type-1" evidence="2">
    <location>
        <begin position="39"/>
        <end position="143"/>
    </location>
</feature>
<feature type="active site" description="Tele-phosphohistidine intermediate; for EIIA activity" evidence="1 2">
    <location>
        <position position="91"/>
    </location>
</feature>
<feature type="binding site" evidence="1">
    <location>
        <position position="76"/>
    </location>
    <ligand>
        <name>Zn(2+)</name>
        <dbReference type="ChEBI" id="CHEBI:29105"/>
        <note>ligand shared with glycerol kinase</note>
    </ligand>
</feature>
<feature type="binding site" evidence="1">
    <location>
        <position position="91"/>
    </location>
    <ligand>
        <name>Zn(2+)</name>
        <dbReference type="ChEBI" id="CHEBI:29105"/>
        <note>ligand shared with glycerol kinase</note>
    </ligand>
</feature>
<feature type="site" description="Important for phospho-donor activity" evidence="1">
    <location>
        <position position="76"/>
    </location>
</feature>
<feature type="modified residue" description="Phosphohistidine; by HPr" evidence="1">
    <location>
        <position position="91"/>
    </location>
</feature>
<feature type="helix" evidence="4">
    <location>
        <begin position="4"/>
        <end position="11"/>
    </location>
</feature>
<protein>
    <recommendedName>
        <fullName evidence="1">PTS system glucose-specific EIIA component</fullName>
    </recommendedName>
    <alternativeName>
        <fullName evidence="1">EIIA-Glc</fullName>
    </alternativeName>
    <alternativeName>
        <fullName evidence="1">EIII-Glc</fullName>
    </alternativeName>
    <alternativeName>
        <fullName evidence="1">Glucose-specific phosphotransferase enzyme IIA component</fullName>
    </alternativeName>
</protein>
<keyword id="KW-0002">3D-structure</keyword>
<keyword id="KW-0963">Cytoplasm</keyword>
<keyword id="KW-0418">Kinase</keyword>
<keyword id="KW-0479">Metal-binding</keyword>
<keyword id="KW-0597">Phosphoprotein</keyword>
<keyword id="KW-0598">Phosphotransferase system</keyword>
<keyword id="KW-0762">Sugar transport</keyword>
<keyword id="KW-0808">Transferase</keyword>
<keyword id="KW-0813">Transport</keyword>
<keyword id="KW-0862">Zinc</keyword>
<dbReference type="EMBL" id="AL513382">
    <property type="protein sequence ID" value="CAD07665.1"/>
    <property type="molecule type" value="Genomic_DNA"/>
</dbReference>
<dbReference type="EMBL" id="AE014613">
    <property type="protein sequence ID" value="AAO68142.1"/>
    <property type="molecule type" value="Genomic_DNA"/>
</dbReference>
<dbReference type="RefSeq" id="NP_456969.1">
    <property type="nucleotide sequence ID" value="NC_003198.1"/>
</dbReference>
<dbReference type="RefSeq" id="WP_000522253.1">
    <property type="nucleotide sequence ID" value="NZ_WSUR01000025.1"/>
</dbReference>
<dbReference type="PDB" id="1O53">
    <property type="method" value="NMR"/>
    <property type="chains" value="A=2-16"/>
</dbReference>
<dbReference type="PDBsum" id="1O53"/>
<dbReference type="BMRB" id="P0A284"/>
<dbReference type="SMR" id="P0A284"/>
<dbReference type="STRING" id="220341.gene:17586569"/>
<dbReference type="GeneID" id="97394192"/>
<dbReference type="KEGG" id="stt:t0424"/>
<dbReference type="KEGG" id="sty:STY2670"/>
<dbReference type="PATRIC" id="fig|220341.7.peg.2707"/>
<dbReference type="eggNOG" id="COG2190">
    <property type="taxonomic scope" value="Bacteria"/>
</dbReference>
<dbReference type="HOGENOM" id="CLU_012312_5_1_6"/>
<dbReference type="OMA" id="KMVAPCD"/>
<dbReference type="OrthoDB" id="7571469at2"/>
<dbReference type="EvolutionaryTrace" id="P0A284"/>
<dbReference type="Proteomes" id="UP000000541">
    <property type="component" value="Chromosome"/>
</dbReference>
<dbReference type="Proteomes" id="UP000002670">
    <property type="component" value="Chromosome"/>
</dbReference>
<dbReference type="GO" id="GO:0005737">
    <property type="term" value="C:cytoplasm"/>
    <property type="evidence" value="ECO:0007669"/>
    <property type="project" value="UniProtKB-SubCell"/>
</dbReference>
<dbReference type="GO" id="GO:0016301">
    <property type="term" value="F:kinase activity"/>
    <property type="evidence" value="ECO:0007669"/>
    <property type="project" value="UniProtKB-KW"/>
</dbReference>
<dbReference type="GO" id="GO:0046872">
    <property type="term" value="F:metal ion binding"/>
    <property type="evidence" value="ECO:0007669"/>
    <property type="project" value="UniProtKB-KW"/>
</dbReference>
<dbReference type="GO" id="GO:0009401">
    <property type="term" value="P:phosphoenolpyruvate-dependent sugar phosphotransferase system"/>
    <property type="evidence" value="ECO:0007669"/>
    <property type="project" value="UniProtKB-KW"/>
</dbReference>
<dbReference type="CDD" id="cd00210">
    <property type="entry name" value="PTS_IIA_glc"/>
    <property type="match status" value="1"/>
</dbReference>
<dbReference type="FunFam" id="2.70.70.10:FF:000001">
    <property type="entry name" value="PTS system glucose-specific IIA component"/>
    <property type="match status" value="1"/>
</dbReference>
<dbReference type="Gene3D" id="2.70.70.10">
    <property type="entry name" value="Glucose Permease (Domain IIA)"/>
    <property type="match status" value="1"/>
</dbReference>
<dbReference type="InterPro" id="IPR011055">
    <property type="entry name" value="Dup_hybrid_motif"/>
</dbReference>
<dbReference type="InterPro" id="IPR001127">
    <property type="entry name" value="PTS_EIIA_1_perm"/>
</dbReference>
<dbReference type="InterPro" id="IPR050890">
    <property type="entry name" value="PTS_EIIA_component"/>
</dbReference>
<dbReference type="NCBIfam" id="NF006962">
    <property type="entry name" value="PRK09439.1"/>
    <property type="match status" value="1"/>
</dbReference>
<dbReference type="NCBIfam" id="TIGR00830">
    <property type="entry name" value="PTBA"/>
    <property type="match status" value="1"/>
</dbReference>
<dbReference type="PANTHER" id="PTHR45008">
    <property type="entry name" value="PTS SYSTEM GLUCOSE-SPECIFIC EIIA COMPONENT"/>
    <property type="match status" value="1"/>
</dbReference>
<dbReference type="PANTHER" id="PTHR45008:SF1">
    <property type="entry name" value="PTS SYSTEM GLUCOSE-SPECIFIC EIIA COMPONENT"/>
    <property type="match status" value="1"/>
</dbReference>
<dbReference type="Pfam" id="PF00358">
    <property type="entry name" value="PTS_EIIA_1"/>
    <property type="match status" value="1"/>
</dbReference>
<dbReference type="SUPFAM" id="SSF51261">
    <property type="entry name" value="Duplicated hybrid motif"/>
    <property type="match status" value="1"/>
</dbReference>
<dbReference type="PROSITE" id="PS51093">
    <property type="entry name" value="PTS_EIIA_TYPE_1"/>
    <property type="match status" value="1"/>
</dbReference>
<dbReference type="PROSITE" id="PS00371">
    <property type="entry name" value="PTS_EIIA_TYPE_1_HIS"/>
    <property type="match status" value="1"/>
</dbReference>
<gene>
    <name type="primary">crr</name>
    <name type="ordered locus">STY2670</name>
    <name type="ordered locus">t0424</name>
</gene>
<reference key="1">
    <citation type="journal article" date="2001" name="Nature">
        <title>Complete genome sequence of a multiple drug resistant Salmonella enterica serovar Typhi CT18.</title>
        <authorList>
            <person name="Parkhill J."/>
            <person name="Dougan G."/>
            <person name="James K.D."/>
            <person name="Thomson N.R."/>
            <person name="Pickard D."/>
            <person name="Wain J."/>
            <person name="Churcher C.M."/>
            <person name="Mungall K.L."/>
            <person name="Bentley S.D."/>
            <person name="Holden M.T.G."/>
            <person name="Sebaihia M."/>
            <person name="Baker S."/>
            <person name="Basham D."/>
            <person name="Brooks K."/>
            <person name="Chillingworth T."/>
            <person name="Connerton P."/>
            <person name="Cronin A."/>
            <person name="Davis P."/>
            <person name="Davies R.M."/>
            <person name="Dowd L."/>
            <person name="White N."/>
            <person name="Farrar J."/>
            <person name="Feltwell T."/>
            <person name="Hamlin N."/>
            <person name="Haque A."/>
            <person name="Hien T.T."/>
            <person name="Holroyd S."/>
            <person name="Jagels K."/>
            <person name="Krogh A."/>
            <person name="Larsen T.S."/>
            <person name="Leather S."/>
            <person name="Moule S."/>
            <person name="O'Gaora P."/>
            <person name="Parry C."/>
            <person name="Quail M.A."/>
            <person name="Rutherford K.M."/>
            <person name="Simmonds M."/>
            <person name="Skelton J."/>
            <person name="Stevens K."/>
            <person name="Whitehead S."/>
            <person name="Barrell B.G."/>
        </authorList>
    </citation>
    <scope>NUCLEOTIDE SEQUENCE [LARGE SCALE GENOMIC DNA]</scope>
    <source>
        <strain>CT18</strain>
    </source>
</reference>
<reference key="2">
    <citation type="journal article" date="2003" name="J. Bacteriol.">
        <title>Comparative genomics of Salmonella enterica serovar Typhi strains Ty2 and CT18.</title>
        <authorList>
            <person name="Deng W."/>
            <person name="Liou S.-R."/>
            <person name="Plunkett G. III"/>
            <person name="Mayhew G.F."/>
            <person name="Rose D.J."/>
            <person name="Burland V."/>
            <person name="Kodoyianni V."/>
            <person name="Schwartz D.C."/>
            <person name="Blattner F.R."/>
        </authorList>
    </citation>
    <scope>NUCLEOTIDE SEQUENCE [LARGE SCALE GENOMIC DNA]</scope>
    <source>
        <strain>ATCC 700931 / Ty2</strain>
    </source>
</reference>
<comment type="function">
    <text evidence="1">The phosphoenolpyruvate-dependent sugar phosphotransferase system (sugar PTS), a major carbohydrate active transport system, catalyzes the phosphorylation of incoming sugar substrates concomitantly with their translocation across the cell membrane. The enzyme II complex composed of PtsG and Crr is involved in glucose transport.</text>
</comment>
<comment type="cofactor">
    <cofactor evidence="1">
        <name>Zn(2+)</name>
        <dbReference type="ChEBI" id="CHEBI:29105"/>
    </cofactor>
    <text evidence="1">Binds 1 zinc ion per glycerol kinase EIIA-Glc dimer. The zinc ion is important for dimerization.</text>
</comment>
<comment type="subunit">
    <text evidence="1">Heterodimer with glycerol kinase (glpk).</text>
</comment>
<comment type="subcellular location">
    <subcellularLocation>
        <location evidence="3">Cytoplasm</location>
    </subcellularLocation>
</comment>
<comment type="domain">
    <text evidence="2">The EIIA domain is phosphorylated by phospho-HPr on a histidyl residue. Then, it transfers the phosphoryl group to the EIIB domain.</text>
</comment>
<accession>P0A284</accession>
<accession>P02908</accession>
<proteinExistence type="evidence at protein level"/>
<evidence type="ECO:0000250" key="1">
    <source>
        <dbReference type="UniProtKB" id="P69783"/>
    </source>
</evidence>
<evidence type="ECO:0000255" key="2">
    <source>
        <dbReference type="PROSITE-ProRule" id="PRU00416"/>
    </source>
</evidence>
<evidence type="ECO:0000305" key="3"/>
<evidence type="ECO:0007829" key="4">
    <source>
        <dbReference type="PDB" id="1O53"/>
    </source>
</evidence>
<organism>
    <name type="scientific">Salmonella typhi</name>
    <dbReference type="NCBI Taxonomy" id="90370"/>
    <lineage>
        <taxon>Bacteria</taxon>
        <taxon>Pseudomonadati</taxon>
        <taxon>Pseudomonadota</taxon>
        <taxon>Gammaproteobacteria</taxon>
        <taxon>Enterobacterales</taxon>
        <taxon>Enterobacteriaceae</taxon>
        <taxon>Salmonella</taxon>
    </lineage>
</organism>
<sequence length="169" mass="18247">MGLFDKLKSLVSDDKKDTGTIEIVAPLSGEIVNIEDVPDVVFAEKIVGDGIAIKPTGNKMVAPVDGTIGKIFETNHAFSIESDSGIELFVHFGIDTVELKGEGFKRIAEEGQRVKVGDPVIEFDLPLLEEKAKSTLTPVVISNMDEIKELIKLSGSVTVGETPVIRIKK</sequence>
<name>PTGA_SALTI</name>